<gene>
    <name evidence="1" type="primary">rpsI</name>
    <name type="ordered locus">Tlet_1975</name>
</gene>
<organism>
    <name type="scientific">Pseudothermotoga lettingae (strain ATCC BAA-301 / DSM 14385 / NBRC 107922 / TMO)</name>
    <name type="common">Thermotoga lettingae</name>
    <dbReference type="NCBI Taxonomy" id="416591"/>
    <lineage>
        <taxon>Bacteria</taxon>
        <taxon>Thermotogati</taxon>
        <taxon>Thermotogota</taxon>
        <taxon>Thermotogae</taxon>
        <taxon>Thermotogales</taxon>
        <taxon>Thermotogaceae</taxon>
        <taxon>Pseudothermotoga</taxon>
    </lineage>
</organism>
<sequence length="134" mass="15026">MMDKAIFNGLGRRKTSVARVYIVSGNGKLTINDKIFASAEEYFKDRVRARHAFEPLVVTNNDGKLDVFVRVEGGGLSGQAGAVRLALARALIKMDTSFKPVLKSHGMLSRDPRMVERKKYGLRKARRAPQYSKR</sequence>
<reference key="1">
    <citation type="submission" date="2007-08" db="EMBL/GenBank/DDBJ databases">
        <title>Complete sequence of Thermotoga lettingae TMO.</title>
        <authorList>
            <consortium name="US DOE Joint Genome Institute"/>
            <person name="Copeland A."/>
            <person name="Lucas S."/>
            <person name="Lapidus A."/>
            <person name="Barry K."/>
            <person name="Glavina del Rio T."/>
            <person name="Dalin E."/>
            <person name="Tice H."/>
            <person name="Pitluck S."/>
            <person name="Foster B."/>
            <person name="Bruce D."/>
            <person name="Schmutz J."/>
            <person name="Larimer F."/>
            <person name="Land M."/>
            <person name="Hauser L."/>
            <person name="Kyrpides N."/>
            <person name="Mikhailova N."/>
            <person name="Nelson K."/>
            <person name="Gogarten J.P."/>
            <person name="Noll K."/>
            <person name="Richardson P."/>
        </authorList>
    </citation>
    <scope>NUCLEOTIDE SEQUENCE [LARGE SCALE GENOMIC DNA]</scope>
    <source>
        <strain>ATCC BAA-301 / DSM 14385 / NBRC 107922 / TMO</strain>
    </source>
</reference>
<comment type="similarity">
    <text evidence="1">Belongs to the universal ribosomal protein uS9 family.</text>
</comment>
<name>RS9_PSELT</name>
<protein>
    <recommendedName>
        <fullName evidence="1">Small ribosomal subunit protein uS9</fullName>
    </recommendedName>
    <alternativeName>
        <fullName evidence="2">30S ribosomal protein S9</fullName>
    </alternativeName>
</protein>
<keyword id="KW-1185">Reference proteome</keyword>
<keyword id="KW-0687">Ribonucleoprotein</keyword>
<keyword id="KW-0689">Ribosomal protein</keyword>
<evidence type="ECO:0000255" key="1">
    <source>
        <dbReference type="HAMAP-Rule" id="MF_00532"/>
    </source>
</evidence>
<evidence type="ECO:0000305" key="2"/>
<feature type="chain" id="PRO_1000061014" description="Small ribosomal subunit protein uS9">
    <location>
        <begin position="1"/>
        <end position="134"/>
    </location>
</feature>
<dbReference type="EMBL" id="CP000812">
    <property type="protein sequence ID" value="ABV34529.1"/>
    <property type="molecule type" value="Genomic_DNA"/>
</dbReference>
<dbReference type="RefSeq" id="WP_012004005.1">
    <property type="nucleotide sequence ID" value="NZ_BSDV01000001.1"/>
</dbReference>
<dbReference type="SMR" id="A8F8P5"/>
<dbReference type="STRING" id="416591.Tlet_1975"/>
<dbReference type="KEGG" id="tle:Tlet_1975"/>
<dbReference type="eggNOG" id="COG0103">
    <property type="taxonomic scope" value="Bacteria"/>
</dbReference>
<dbReference type="HOGENOM" id="CLU_046483_2_1_0"/>
<dbReference type="OrthoDB" id="9803965at2"/>
<dbReference type="Proteomes" id="UP000002016">
    <property type="component" value="Chromosome"/>
</dbReference>
<dbReference type="GO" id="GO:0005737">
    <property type="term" value="C:cytoplasm"/>
    <property type="evidence" value="ECO:0007669"/>
    <property type="project" value="UniProtKB-ARBA"/>
</dbReference>
<dbReference type="GO" id="GO:0015935">
    <property type="term" value="C:small ribosomal subunit"/>
    <property type="evidence" value="ECO:0007669"/>
    <property type="project" value="TreeGrafter"/>
</dbReference>
<dbReference type="GO" id="GO:0003723">
    <property type="term" value="F:RNA binding"/>
    <property type="evidence" value="ECO:0007669"/>
    <property type="project" value="TreeGrafter"/>
</dbReference>
<dbReference type="GO" id="GO:0003735">
    <property type="term" value="F:structural constituent of ribosome"/>
    <property type="evidence" value="ECO:0007669"/>
    <property type="project" value="InterPro"/>
</dbReference>
<dbReference type="GO" id="GO:0006412">
    <property type="term" value="P:translation"/>
    <property type="evidence" value="ECO:0007669"/>
    <property type="project" value="UniProtKB-UniRule"/>
</dbReference>
<dbReference type="FunFam" id="3.30.230.10:FF:000001">
    <property type="entry name" value="30S ribosomal protein S9"/>
    <property type="match status" value="1"/>
</dbReference>
<dbReference type="Gene3D" id="3.30.230.10">
    <property type="match status" value="1"/>
</dbReference>
<dbReference type="HAMAP" id="MF_00532_B">
    <property type="entry name" value="Ribosomal_uS9_B"/>
    <property type="match status" value="1"/>
</dbReference>
<dbReference type="InterPro" id="IPR020568">
    <property type="entry name" value="Ribosomal_Su5_D2-typ_SF"/>
</dbReference>
<dbReference type="InterPro" id="IPR000754">
    <property type="entry name" value="Ribosomal_uS9"/>
</dbReference>
<dbReference type="InterPro" id="IPR023035">
    <property type="entry name" value="Ribosomal_uS9_bac/plastid"/>
</dbReference>
<dbReference type="InterPro" id="IPR020574">
    <property type="entry name" value="Ribosomal_uS9_CS"/>
</dbReference>
<dbReference type="InterPro" id="IPR014721">
    <property type="entry name" value="Ribsml_uS5_D2-typ_fold_subgr"/>
</dbReference>
<dbReference type="NCBIfam" id="NF001099">
    <property type="entry name" value="PRK00132.1"/>
    <property type="match status" value="1"/>
</dbReference>
<dbReference type="PANTHER" id="PTHR21569">
    <property type="entry name" value="RIBOSOMAL PROTEIN S9"/>
    <property type="match status" value="1"/>
</dbReference>
<dbReference type="PANTHER" id="PTHR21569:SF1">
    <property type="entry name" value="SMALL RIBOSOMAL SUBUNIT PROTEIN US9M"/>
    <property type="match status" value="1"/>
</dbReference>
<dbReference type="Pfam" id="PF00380">
    <property type="entry name" value="Ribosomal_S9"/>
    <property type="match status" value="1"/>
</dbReference>
<dbReference type="SUPFAM" id="SSF54211">
    <property type="entry name" value="Ribosomal protein S5 domain 2-like"/>
    <property type="match status" value="1"/>
</dbReference>
<dbReference type="PROSITE" id="PS00360">
    <property type="entry name" value="RIBOSOMAL_S9"/>
    <property type="match status" value="1"/>
</dbReference>
<proteinExistence type="inferred from homology"/>
<accession>A8F8P5</accession>